<accession>A1C6D6</accession>
<comment type="function">
    <text evidence="1">Lipase which is essential for lysis of subvacuolar cytoplasm to vacuole targeted bodies and intravacuolar autophagic bodies. Involved in the lysis of intravacuolar multivesicular body (MVB) vesicles. The intravacuolar membrane disintegration by atg15 is critical to life span extension (By similarity).</text>
</comment>
<comment type="catalytic activity">
    <reaction>
        <text>a triacylglycerol + H2O = a diacylglycerol + a fatty acid + H(+)</text>
        <dbReference type="Rhea" id="RHEA:12044"/>
        <dbReference type="ChEBI" id="CHEBI:15377"/>
        <dbReference type="ChEBI" id="CHEBI:15378"/>
        <dbReference type="ChEBI" id="CHEBI:17855"/>
        <dbReference type="ChEBI" id="CHEBI:18035"/>
        <dbReference type="ChEBI" id="CHEBI:28868"/>
        <dbReference type="EC" id="3.1.1.3"/>
    </reaction>
</comment>
<comment type="subunit">
    <text evidence="1">Binds to both phosphatidylinositol (PI) and phosphatidylinositol 3,5-bisphosphate (PIP2).</text>
</comment>
<comment type="subcellular location">
    <subcellularLocation>
        <location evidence="2">Endosome</location>
        <location evidence="2">Multivesicular body membrane</location>
        <topology evidence="2">Single-pass type II membrane protein</topology>
    </subcellularLocation>
    <subcellularLocation>
        <location evidence="2">Prevacuolar compartment membrane</location>
        <topology evidence="2">Single-pass type II membrane protein</topology>
    </subcellularLocation>
    <text evidence="2">From ER, targeted to vacuolar lumen at the MVB vesicles via the Golgi and the prevacuolar compartment (PVC).</text>
</comment>
<comment type="similarity">
    <text evidence="5">Belongs to the AB hydrolase superfamily. Lipase family.</text>
</comment>
<evidence type="ECO:0000250" key="1"/>
<evidence type="ECO:0000250" key="2">
    <source>
        <dbReference type="UniProtKB" id="P25641"/>
    </source>
</evidence>
<evidence type="ECO:0000255" key="3"/>
<evidence type="ECO:0000256" key="4">
    <source>
        <dbReference type="SAM" id="MobiDB-lite"/>
    </source>
</evidence>
<evidence type="ECO:0000305" key="5"/>
<organism>
    <name type="scientific">Aspergillus clavatus (strain ATCC 1007 / CBS 513.65 / DSM 816 / NCTC 3887 / NRRL 1 / QM 1276 / 107)</name>
    <dbReference type="NCBI Taxonomy" id="344612"/>
    <lineage>
        <taxon>Eukaryota</taxon>
        <taxon>Fungi</taxon>
        <taxon>Dikarya</taxon>
        <taxon>Ascomycota</taxon>
        <taxon>Pezizomycotina</taxon>
        <taxon>Eurotiomycetes</taxon>
        <taxon>Eurotiomycetidae</taxon>
        <taxon>Eurotiales</taxon>
        <taxon>Aspergillaceae</taxon>
        <taxon>Aspergillus</taxon>
        <taxon>Aspergillus subgen. Fumigati</taxon>
    </lineage>
</organism>
<sequence length="630" mass="68898">MKSSQRRIKRHAMRDMSISTLLLSVVLLPSVVSANDHVYFNPPSPGSPFLGPQIPLTGPPSLTNEHEFTLRHIYERGTNDQPDLHRRLDIKPHTRLWAVSDDGLEKELVTFDTPLVASSSPLTIQRLADRRPSVIEGYLTAARYNGEAVALSSSDWVMDTLAGPDVTKKETVLTFAKMTANDYIEEPGTEDWNYIHGRFNYSSSFGWQSDGLRGHIYADTKNNTIVISLKGTSPALFDGAGTTTNDKINDNLFFSCCCGQGGSYLWRQVCDCQQSAFTANLTCIAEAMNDENKYYRAAIDLYTNVTDMYPDANVWMTGHSLGGAMSSLLGLTFGLPVVTFEAVPEALPAARLGLPSPPGHDPRLPQTRKYTGTYHFGHTADPVYMGTCNGVGSICTWGGYAMESACHTGQMCVYDTVEDKGWRVALSTHRIKAVISDVLEVYDNVPPCAAEEECYDCELWKFFRSNGSETTTTSRTSTTTTPTTTRTLTCETPGWWGCLDESTTTTATTATSTTTTTSTCKTPGWFGCKDSTTTVDATAAPTVTTTIATPTTFPISSTTCKDPGWFGCRDPSSTTASVTAPPFSTSTSSDHVRADHSIGDGAAHPLTRMYLERLRQVEFAWGSDIEHYEI</sequence>
<name>ATG15_ASPCL</name>
<feature type="chain" id="PRO_0000317958" description="Putative lipase atg15">
    <location>
        <begin position="1"/>
        <end position="630"/>
    </location>
</feature>
<feature type="topological domain" description="Cytoplasmic" evidence="1">
    <location>
        <begin position="1"/>
        <end position="20"/>
    </location>
</feature>
<feature type="transmembrane region" description="Helical; Signal-anchor for type II membrane protein">
    <location>
        <begin position="21"/>
        <end position="40"/>
    </location>
</feature>
<feature type="topological domain" description="Lumenal" evidence="1">
    <location>
        <begin position="41"/>
        <end position="630"/>
    </location>
</feature>
<feature type="region of interest" description="Disordered" evidence="4">
    <location>
        <begin position="577"/>
        <end position="599"/>
    </location>
</feature>
<feature type="compositionally biased region" description="Polar residues" evidence="4">
    <location>
        <begin position="577"/>
        <end position="589"/>
    </location>
</feature>
<feature type="active site" description="Charge relay system" evidence="1">
    <location>
        <position position="320"/>
    </location>
</feature>
<feature type="glycosylation site" description="N-linked (GlcNAc...) asparagine" evidence="3">
    <location>
        <position position="200"/>
    </location>
</feature>
<feature type="glycosylation site" description="N-linked (GlcNAc...) asparagine" evidence="3">
    <location>
        <position position="222"/>
    </location>
</feature>
<feature type="glycosylation site" description="N-linked (GlcNAc...) asparagine" evidence="3">
    <location>
        <position position="280"/>
    </location>
</feature>
<feature type="glycosylation site" description="N-linked (GlcNAc...) asparagine" evidence="3">
    <location>
        <position position="304"/>
    </location>
</feature>
<feature type="glycosylation site" description="N-linked (GlcNAc...) asparagine" evidence="3">
    <location>
        <position position="466"/>
    </location>
</feature>
<dbReference type="EC" id="3.1.1.3"/>
<dbReference type="EMBL" id="DS027045">
    <property type="protein sequence ID" value="EAW13957.1"/>
    <property type="molecule type" value="Genomic_DNA"/>
</dbReference>
<dbReference type="RefSeq" id="XP_001275383.1">
    <property type="nucleotide sequence ID" value="XM_001275382.1"/>
</dbReference>
<dbReference type="STRING" id="344612.A1C6D6"/>
<dbReference type="ESTHER" id="aspcl-atg15">
    <property type="family name" value="ATG15-related-lipase"/>
</dbReference>
<dbReference type="GlyCosmos" id="A1C6D6">
    <property type="glycosylation" value="5 sites, No reported glycans"/>
</dbReference>
<dbReference type="EnsemblFungi" id="EAW13957">
    <property type="protein sequence ID" value="EAW13957"/>
    <property type="gene ID" value="ACLA_069880"/>
</dbReference>
<dbReference type="GeneID" id="4707621"/>
<dbReference type="KEGG" id="act:ACLA_069880"/>
<dbReference type="VEuPathDB" id="FungiDB:ACLA_069880"/>
<dbReference type="eggNOG" id="KOG4540">
    <property type="taxonomic scope" value="Eukaryota"/>
</dbReference>
<dbReference type="HOGENOM" id="CLU_028295_0_1_1"/>
<dbReference type="OMA" id="TYHFGHT"/>
<dbReference type="OrthoDB" id="58570at2759"/>
<dbReference type="Proteomes" id="UP000006701">
    <property type="component" value="Unassembled WGS sequence"/>
</dbReference>
<dbReference type="GO" id="GO:0032585">
    <property type="term" value="C:multivesicular body membrane"/>
    <property type="evidence" value="ECO:0007669"/>
    <property type="project" value="UniProtKB-SubCell"/>
</dbReference>
<dbReference type="GO" id="GO:0005775">
    <property type="term" value="C:vacuolar lumen"/>
    <property type="evidence" value="ECO:0007669"/>
    <property type="project" value="TreeGrafter"/>
</dbReference>
<dbReference type="GO" id="GO:0004620">
    <property type="term" value="F:phospholipase activity"/>
    <property type="evidence" value="ECO:0007669"/>
    <property type="project" value="TreeGrafter"/>
</dbReference>
<dbReference type="GO" id="GO:0004806">
    <property type="term" value="F:triacylglycerol lipase activity"/>
    <property type="evidence" value="ECO:0007669"/>
    <property type="project" value="UniProtKB-EC"/>
</dbReference>
<dbReference type="GO" id="GO:0034496">
    <property type="term" value="P:multivesicular body membrane disassembly"/>
    <property type="evidence" value="ECO:0007669"/>
    <property type="project" value="TreeGrafter"/>
</dbReference>
<dbReference type="GO" id="GO:0046461">
    <property type="term" value="P:neutral lipid catabolic process"/>
    <property type="evidence" value="ECO:0007669"/>
    <property type="project" value="TreeGrafter"/>
</dbReference>
<dbReference type="GO" id="GO:0006660">
    <property type="term" value="P:phosphatidylserine catabolic process"/>
    <property type="evidence" value="ECO:0007669"/>
    <property type="project" value="TreeGrafter"/>
</dbReference>
<dbReference type="GO" id="GO:0034727">
    <property type="term" value="P:piecemeal microautophagy of the nucleus"/>
    <property type="evidence" value="ECO:0007669"/>
    <property type="project" value="TreeGrafter"/>
</dbReference>
<dbReference type="CDD" id="cd00519">
    <property type="entry name" value="Lipase_3"/>
    <property type="match status" value="1"/>
</dbReference>
<dbReference type="FunFam" id="3.40.50.1820:FF:000129">
    <property type="entry name" value="Autophagy related lipase Atg15, putative"/>
    <property type="match status" value="1"/>
</dbReference>
<dbReference type="Gene3D" id="3.40.50.1820">
    <property type="entry name" value="alpha/beta hydrolase"/>
    <property type="match status" value="1"/>
</dbReference>
<dbReference type="InterPro" id="IPR029058">
    <property type="entry name" value="AB_hydrolase_fold"/>
</dbReference>
<dbReference type="InterPro" id="IPR050805">
    <property type="entry name" value="ATG15_Lipase"/>
</dbReference>
<dbReference type="InterPro" id="IPR002921">
    <property type="entry name" value="Fungal_lipase-type"/>
</dbReference>
<dbReference type="PANTHER" id="PTHR47175">
    <property type="entry name" value="LIPASE ATG15-RELATED"/>
    <property type="match status" value="1"/>
</dbReference>
<dbReference type="PANTHER" id="PTHR47175:SF2">
    <property type="entry name" value="LIPASE ATG15-RELATED"/>
    <property type="match status" value="1"/>
</dbReference>
<dbReference type="Pfam" id="PF01764">
    <property type="entry name" value="Lipase_3"/>
    <property type="match status" value="1"/>
</dbReference>
<dbReference type="SUPFAM" id="SSF53474">
    <property type="entry name" value="alpha/beta-Hydrolases"/>
    <property type="match status" value="1"/>
</dbReference>
<keyword id="KW-0072">Autophagy</keyword>
<keyword id="KW-0967">Endosome</keyword>
<keyword id="KW-0325">Glycoprotein</keyword>
<keyword id="KW-0378">Hydrolase</keyword>
<keyword id="KW-0442">Lipid degradation</keyword>
<keyword id="KW-0443">Lipid metabolism</keyword>
<keyword id="KW-0472">Membrane</keyword>
<keyword id="KW-1185">Reference proteome</keyword>
<keyword id="KW-0735">Signal-anchor</keyword>
<keyword id="KW-0812">Transmembrane</keyword>
<keyword id="KW-1133">Transmembrane helix</keyword>
<protein>
    <recommendedName>
        <fullName>Putative lipase atg15</fullName>
        <ecNumber>3.1.1.3</ecNumber>
    </recommendedName>
    <alternativeName>
        <fullName>Autophagy-related protein 15</fullName>
    </alternativeName>
</protein>
<gene>
    <name type="primary">atg15</name>
    <name type="ORF">ACLA_069880</name>
</gene>
<proteinExistence type="inferred from homology"/>
<reference key="1">
    <citation type="journal article" date="2008" name="PLoS Genet.">
        <title>Genomic islands in the pathogenic filamentous fungus Aspergillus fumigatus.</title>
        <authorList>
            <person name="Fedorova N.D."/>
            <person name="Khaldi N."/>
            <person name="Joardar V.S."/>
            <person name="Maiti R."/>
            <person name="Amedeo P."/>
            <person name="Anderson M.J."/>
            <person name="Crabtree J."/>
            <person name="Silva J.C."/>
            <person name="Badger J.H."/>
            <person name="Albarraq A."/>
            <person name="Angiuoli S."/>
            <person name="Bussey H."/>
            <person name="Bowyer P."/>
            <person name="Cotty P.J."/>
            <person name="Dyer P.S."/>
            <person name="Egan A."/>
            <person name="Galens K."/>
            <person name="Fraser-Liggett C.M."/>
            <person name="Haas B.J."/>
            <person name="Inman J.M."/>
            <person name="Kent R."/>
            <person name="Lemieux S."/>
            <person name="Malavazi I."/>
            <person name="Orvis J."/>
            <person name="Roemer T."/>
            <person name="Ronning C.M."/>
            <person name="Sundaram J.P."/>
            <person name="Sutton G."/>
            <person name="Turner G."/>
            <person name="Venter J.C."/>
            <person name="White O.R."/>
            <person name="Whitty B.R."/>
            <person name="Youngman P."/>
            <person name="Wolfe K.H."/>
            <person name="Goldman G.H."/>
            <person name="Wortman J.R."/>
            <person name="Jiang B."/>
            <person name="Denning D.W."/>
            <person name="Nierman W.C."/>
        </authorList>
    </citation>
    <scope>NUCLEOTIDE SEQUENCE [LARGE SCALE GENOMIC DNA]</scope>
    <source>
        <strain>ATCC 1007 / CBS 513.65 / DSM 816 / NCTC 3887 / NRRL 1 / QM 1276 / 107</strain>
    </source>
</reference>